<evidence type="ECO:0000255" key="1">
    <source>
        <dbReference type="HAMAP-Rule" id="MF_01338"/>
    </source>
</evidence>
<organism>
    <name type="scientific">Oenothera elata subsp. hookeri</name>
    <name type="common">Hooker's evening primrose</name>
    <name type="synonym">Oenothera hookeri</name>
    <dbReference type="NCBI Taxonomy" id="85636"/>
    <lineage>
        <taxon>Eukaryota</taxon>
        <taxon>Viridiplantae</taxon>
        <taxon>Streptophyta</taxon>
        <taxon>Embryophyta</taxon>
        <taxon>Tracheophyta</taxon>
        <taxon>Spermatophyta</taxon>
        <taxon>Magnoliopsida</taxon>
        <taxon>eudicotyledons</taxon>
        <taxon>Gunneridae</taxon>
        <taxon>Pentapetalae</taxon>
        <taxon>rosids</taxon>
        <taxon>malvids</taxon>
        <taxon>Myrtales</taxon>
        <taxon>Onagraceae</taxon>
        <taxon>Onagroideae</taxon>
        <taxon>Onagreae</taxon>
        <taxon>Oenothera</taxon>
    </lineage>
</organism>
<keyword id="KW-0007">Acetylation</keyword>
<keyword id="KW-0113">Calvin cycle</keyword>
<keyword id="KW-0120">Carbon dioxide fixation</keyword>
<keyword id="KW-0150">Chloroplast</keyword>
<keyword id="KW-1015">Disulfide bond</keyword>
<keyword id="KW-0456">Lyase</keyword>
<keyword id="KW-0460">Magnesium</keyword>
<keyword id="KW-0479">Metal-binding</keyword>
<keyword id="KW-0488">Methylation</keyword>
<keyword id="KW-0503">Monooxygenase</keyword>
<keyword id="KW-0560">Oxidoreductase</keyword>
<keyword id="KW-0601">Photorespiration</keyword>
<keyword id="KW-0602">Photosynthesis</keyword>
<keyword id="KW-0934">Plastid</keyword>
<proteinExistence type="inferred from homology"/>
<feature type="propeptide" id="PRO_0000031325" evidence="1">
    <location>
        <begin position="1"/>
        <end position="2"/>
    </location>
</feature>
<feature type="chain" id="PRO_0000031326" description="Ribulose bisphosphate carboxylase large chain">
    <location>
        <begin position="3"/>
        <end position="475"/>
    </location>
</feature>
<feature type="active site" description="Proton acceptor" evidence="1">
    <location>
        <position position="175"/>
    </location>
</feature>
<feature type="active site" description="Proton acceptor" evidence="1">
    <location>
        <position position="294"/>
    </location>
</feature>
<feature type="binding site" description="in homodimeric partner" evidence="1">
    <location>
        <position position="123"/>
    </location>
    <ligand>
        <name>substrate</name>
    </ligand>
</feature>
<feature type="binding site" evidence="1">
    <location>
        <position position="173"/>
    </location>
    <ligand>
        <name>substrate</name>
    </ligand>
</feature>
<feature type="binding site" evidence="1">
    <location>
        <position position="177"/>
    </location>
    <ligand>
        <name>substrate</name>
    </ligand>
</feature>
<feature type="binding site" description="via carbamate group" evidence="1">
    <location>
        <position position="201"/>
    </location>
    <ligand>
        <name>Mg(2+)</name>
        <dbReference type="ChEBI" id="CHEBI:18420"/>
    </ligand>
</feature>
<feature type="binding site" evidence="1">
    <location>
        <position position="203"/>
    </location>
    <ligand>
        <name>Mg(2+)</name>
        <dbReference type="ChEBI" id="CHEBI:18420"/>
    </ligand>
</feature>
<feature type="binding site" evidence="1">
    <location>
        <position position="204"/>
    </location>
    <ligand>
        <name>Mg(2+)</name>
        <dbReference type="ChEBI" id="CHEBI:18420"/>
    </ligand>
</feature>
<feature type="binding site" evidence="1">
    <location>
        <position position="295"/>
    </location>
    <ligand>
        <name>substrate</name>
    </ligand>
</feature>
<feature type="binding site" evidence="1">
    <location>
        <position position="327"/>
    </location>
    <ligand>
        <name>substrate</name>
    </ligand>
</feature>
<feature type="binding site" evidence="1">
    <location>
        <position position="379"/>
    </location>
    <ligand>
        <name>substrate</name>
    </ligand>
</feature>
<feature type="site" description="Transition state stabilizer" evidence="1">
    <location>
        <position position="334"/>
    </location>
</feature>
<feature type="modified residue" description="N-acetylproline" evidence="1">
    <location>
        <position position="3"/>
    </location>
</feature>
<feature type="modified residue" description="N6,N6,N6-trimethyllysine" evidence="1">
    <location>
        <position position="14"/>
    </location>
</feature>
<feature type="modified residue" description="N6-carboxylysine" evidence="1">
    <location>
        <position position="201"/>
    </location>
</feature>
<feature type="disulfide bond" description="Interchain; in linked form" evidence="1">
    <location>
        <position position="247"/>
    </location>
</feature>
<name>RBL_OENEH</name>
<comment type="function">
    <text evidence="1">RuBisCO catalyzes two reactions: the carboxylation of D-ribulose 1,5-bisphosphate, the primary event in carbon dioxide fixation, as well as the oxidative fragmentation of the pentose substrate in the photorespiration process. Both reactions occur simultaneously and in competition at the same active site.</text>
</comment>
<comment type="catalytic activity">
    <reaction evidence="1">
        <text>2 (2R)-3-phosphoglycerate + 2 H(+) = D-ribulose 1,5-bisphosphate + CO2 + H2O</text>
        <dbReference type="Rhea" id="RHEA:23124"/>
        <dbReference type="ChEBI" id="CHEBI:15377"/>
        <dbReference type="ChEBI" id="CHEBI:15378"/>
        <dbReference type="ChEBI" id="CHEBI:16526"/>
        <dbReference type="ChEBI" id="CHEBI:57870"/>
        <dbReference type="ChEBI" id="CHEBI:58272"/>
        <dbReference type="EC" id="4.1.1.39"/>
    </reaction>
</comment>
<comment type="catalytic activity">
    <reaction evidence="1">
        <text>D-ribulose 1,5-bisphosphate + O2 = 2-phosphoglycolate + (2R)-3-phosphoglycerate + 2 H(+)</text>
        <dbReference type="Rhea" id="RHEA:36631"/>
        <dbReference type="ChEBI" id="CHEBI:15378"/>
        <dbReference type="ChEBI" id="CHEBI:15379"/>
        <dbReference type="ChEBI" id="CHEBI:57870"/>
        <dbReference type="ChEBI" id="CHEBI:58033"/>
        <dbReference type="ChEBI" id="CHEBI:58272"/>
    </reaction>
</comment>
<comment type="cofactor">
    <cofactor evidence="1">
        <name>Mg(2+)</name>
        <dbReference type="ChEBI" id="CHEBI:18420"/>
    </cofactor>
    <text evidence="1">Binds 1 Mg(2+) ion per subunit.</text>
</comment>
<comment type="subunit">
    <text evidence="1">Heterohexadecamer of 8 large chains and 8 small chains; disulfide-linked. The disulfide link is formed within the large subunit homodimers.</text>
</comment>
<comment type="subcellular location">
    <subcellularLocation>
        <location>Plastid</location>
        <location>Chloroplast</location>
    </subcellularLocation>
</comment>
<comment type="PTM">
    <text evidence="1">The disulfide bond which can form in the large chain dimeric partners within the hexadecamer appears to be associated with oxidative stress and protein turnover.</text>
</comment>
<comment type="miscellaneous">
    <text evidence="1">The basic functional RuBisCO is composed of a large chain homodimer in a 'head-to-tail' conformation. In form I RuBisCO this homodimer is arranged in a barrel-like tetramer with the small subunits forming a tetrameric 'cap' on each end of the 'barrel'.</text>
</comment>
<comment type="similarity">
    <text evidence="1">Belongs to the RuBisCO large chain family. Type I subfamily.</text>
</comment>
<sequence>MSPQTETKASVGFKAGVKDYKLTYYTPEYETKDTDILAAFRVTPQPGVPPEEAGAAVAAESSTGTWTTVWTDGLTSLDRYKGRCYHIEPVAGEENQYICYVAYPLDLFEEGSVTNMFTSIVGNVFGFKALRALRLEDLRIPTAYVKTFQGPPHGIQVERDKLNKYGRPLLGCTIKPKLGLSAKNYGRAVYECLRGGLDFTKDDENVNSQPFMRWRDRFLFCAEAIYKSQAETGEIKGHYLNATAGTCEEMMKRAIFARELGVPIVMHDYLTGGFTANTSLAHYCRDNGLLLHIHRAMHAVIDRQKNHGIHFRVLAKALRMSGGDHIHSGTVVGKLEGERDITLGFVDLLRDDFIEKDRSRGIYFTQDWVSLPGVLPVASGGIHVWHMPALTEIFGDDSVLQFGGGTLGHPWGNAPGAVANRVALEACVQARNEGRDLAREGNEIIREACKWSPELAAACEVWKEIKFEFQAMDTL</sequence>
<geneLocation type="chloroplast"/>
<gene>
    <name evidence="1" type="primary">rbcL</name>
</gene>
<protein>
    <recommendedName>
        <fullName evidence="1">Ribulose bisphosphate carboxylase large chain</fullName>
        <shortName evidence="1">RuBisCO large subunit</shortName>
        <ecNumber evidence="1">4.1.1.39</ecNumber>
    </recommendedName>
</protein>
<dbReference type="EC" id="4.1.1.39" evidence="1"/>
<dbReference type="EMBL" id="AJ271079">
    <property type="protein sequence ID" value="CAB67126.2"/>
    <property type="molecule type" value="Genomic_DNA"/>
</dbReference>
<dbReference type="RefSeq" id="NP_084661.2">
    <property type="nucleotide sequence ID" value="NC_002693.2"/>
</dbReference>
<dbReference type="SMR" id="Q9MTP9"/>
<dbReference type="GeneID" id="802699"/>
<dbReference type="GO" id="GO:0009507">
    <property type="term" value="C:chloroplast"/>
    <property type="evidence" value="ECO:0007669"/>
    <property type="project" value="UniProtKB-SubCell"/>
</dbReference>
<dbReference type="GO" id="GO:0000287">
    <property type="term" value="F:magnesium ion binding"/>
    <property type="evidence" value="ECO:0007669"/>
    <property type="project" value="UniProtKB-UniRule"/>
</dbReference>
<dbReference type="GO" id="GO:0004497">
    <property type="term" value="F:monooxygenase activity"/>
    <property type="evidence" value="ECO:0007669"/>
    <property type="project" value="UniProtKB-KW"/>
</dbReference>
<dbReference type="GO" id="GO:0016984">
    <property type="term" value="F:ribulose-bisphosphate carboxylase activity"/>
    <property type="evidence" value="ECO:0007669"/>
    <property type="project" value="UniProtKB-UniRule"/>
</dbReference>
<dbReference type="GO" id="GO:0009853">
    <property type="term" value="P:photorespiration"/>
    <property type="evidence" value="ECO:0007669"/>
    <property type="project" value="UniProtKB-KW"/>
</dbReference>
<dbReference type="GO" id="GO:0019253">
    <property type="term" value="P:reductive pentose-phosphate cycle"/>
    <property type="evidence" value="ECO:0007669"/>
    <property type="project" value="UniProtKB-UniRule"/>
</dbReference>
<dbReference type="CDD" id="cd08212">
    <property type="entry name" value="RuBisCO_large_I"/>
    <property type="match status" value="1"/>
</dbReference>
<dbReference type="FunFam" id="3.20.20.110:FF:000001">
    <property type="entry name" value="Ribulose bisphosphate carboxylase large chain"/>
    <property type="match status" value="1"/>
</dbReference>
<dbReference type="FunFam" id="3.30.70.150:FF:000001">
    <property type="entry name" value="Ribulose bisphosphate carboxylase large chain"/>
    <property type="match status" value="1"/>
</dbReference>
<dbReference type="Gene3D" id="3.20.20.110">
    <property type="entry name" value="Ribulose bisphosphate carboxylase, large subunit, C-terminal domain"/>
    <property type="match status" value="1"/>
</dbReference>
<dbReference type="Gene3D" id="3.30.70.150">
    <property type="entry name" value="RuBisCO large subunit, N-terminal domain"/>
    <property type="match status" value="1"/>
</dbReference>
<dbReference type="HAMAP" id="MF_01338">
    <property type="entry name" value="RuBisCO_L_type1"/>
    <property type="match status" value="1"/>
</dbReference>
<dbReference type="InterPro" id="IPR033966">
    <property type="entry name" value="RuBisCO"/>
</dbReference>
<dbReference type="InterPro" id="IPR020878">
    <property type="entry name" value="RuBisCo_large_chain_AS"/>
</dbReference>
<dbReference type="InterPro" id="IPR000685">
    <property type="entry name" value="RuBisCO_lsu_C"/>
</dbReference>
<dbReference type="InterPro" id="IPR036376">
    <property type="entry name" value="RuBisCO_lsu_C_sf"/>
</dbReference>
<dbReference type="InterPro" id="IPR017443">
    <property type="entry name" value="RuBisCO_lsu_fd_N"/>
</dbReference>
<dbReference type="InterPro" id="IPR036422">
    <property type="entry name" value="RuBisCO_lsu_N_sf"/>
</dbReference>
<dbReference type="InterPro" id="IPR020888">
    <property type="entry name" value="RuBisCO_lsuI"/>
</dbReference>
<dbReference type="NCBIfam" id="NF003252">
    <property type="entry name" value="PRK04208.1"/>
    <property type="match status" value="1"/>
</dbReference>
<dbReference type="PANTHER" id="PTHR42704">
    <property type="entry name" value="RIBULOSE BISPHOSPHATE CARBOXYLASE"/>
    <property type="match status" value="1"/>
</dbReference>
<dbReference type="PANTHER" id="PTHR42704:SF15">
    <property type="entry name" value="RIBULOSE BISPHOSPHATE CARBOXYLASE LARGE CHAIN"/>
    <property type="match status" value="1"/>
</dbReference>
<dbReference type="Pfam" id="PF00016">
    <property type="entry name" value="RuBisCO_large"/>
    <property type="match status" value="1"/>
</dbReference>
<dbReference type="Pfam" id="PF02788">
    <property type="entry name" value="RuBisCO_large_N"/>
    <property type="match status" value="1"/>
</dbReference>
<dbReference type="SFLD" id="SFLDG01052">
    <property type="entry name" value="RuBisCO"/>
    <property type="match status" value="1"/>
</dbReference>
<dbReference type="SFLD" id="SFLDS00014">
    <property type="entry name" value="RuBisCO"/>
    <property type="match status" value="1"/>
</dbReference>
<dbReference type="SFLD" id="SFLDG00301">
    <property type="entry name" value="RuBisCO-like_proteins"/>
    <property type="match status" value="1"/>
</dbReference>
<dbReference type="SUPFAM" id="SSF51649">
    <property type="entry name" value="RuBisCo, C-terminal domain"/>
    <property type="match status" value="1"/>
</dbReference>
<dbReference type="SUPFAM" id="SSF54966">
    <property type="entry name" value="RuBisCO, large subunit, small (N-terminal) domain"/>
    <property type="match status" value="1"/>
</dbReference>
<dbReference type="PROSITE" id="PS00157">
    <property type="entry name" value="RUBISCO_LARGE"/>
    <property type="match status" value="1"/>
</dbReference>
<reference key="1">
    <citation type="journal article" date="2000" name="Mol. Gen. Genet.">
        <title>Complete nucleotide sequence of the Oenothera elata plastid chromosome, representing plastome I of the five distinguishable Euoenothera plastomes.</title>
        <authorList>
            <person name="Hupfer H."/>
            <person name="Swiatek M."/>
            <person name="Hornung S."/>
            <person name="Herrmann R.G."/>
            <person name="Maier R.M."/>
            <person name="Chiu W.-L."/>
            <person name="Sears B."/>
        </authorList>
    </citation>
    <scope>NUCLEOTIDE SEQUENCE [LARGE SCALE GENOMIC DNA]</scope>
    <source>
        <strain>cv. Johansen</strain>
    </source>
</reference>
<reference key="2">
    <citation type="journal article" date="2008" name="Nucleic Acids Res.">
        <title>The complete nucleotide sequences of the five genetically distinct plastid genomes of Oenothera, subsection Oenothera: I. Sequence evaluation and plastome evolution.</title>
        <authorList>
            <person name="Greiner S."/>
            <person name="Wang X."/>
            <person name="Rauwolf U."/>
            <person name="Silber M.V."/>
            <person name="Mayer K."/>
            <person name="Meurer J."/>
            <person name="Haberer G."/>
            <person name="Herrmann R.G."/>
        </authorList>
    </citation>
    <scope>SEQUENCE REVISION TO 470</scope>
</reference>
<accession>Q9MTP9</accession>